<proteinExistence type="inferred from homology"/>
<dbReference type="EMBL" id="EU262889">
    <property type="protein sequence ID" value="ABW98912.1"/>
    <property type="molecule type" value="Genomic_DNA"/>
</dbReference>
<dbReference type="RefSeq" id="YP_001687407.1">
    <property type="nucleotide sequence ID" value="NC_010361.1"/>
</dbReference>
<dbReference type="SMR" id="B0Z500"/>
<dbReference type="GeneID" id="5952034"/>
<dbReference type="GO" id="GO:0009507">
    <property type="term" value="C:chloroplast"/>
    <property type="evidence" value="ECO:0007669"/>
    <property type="project" value="UniProtKB-SubCell"/>
</dbReference>
<dbReference type="GO" id="GO:0005763">
    <property type="term" value="C:mitochondrial small ribosomal subunit"/>
    <property type="evidence" value="ECO:0007669"/>
    <property type="project" value="TreeGrafter"/>
</dbReference>
<dbReference type="GO" id="GO:0019843">
    <property type="term" value="F:rRNA binding"/>
    <property type="evidence" value="ECO:0007669"/>
    <property type="project" value="UniProtKB-UniRule"/>
</dbReference>
<dbReference type="GO" id="GO:0003735">
    <property type="term" value="F:structural constituent of ribosome"/>
    <property type="evidence" value="ECO:0007669"/>
    <property type="project" value="InterPro"/>
</dbReference>
<dbReference type="GO" id="GO:0000028">
    <property type="term" value="P:ribosomal small subunit assembly"/>
    <property type="evidence" value="ECO:0007669"/>
    <property type="project" value="TreeGrafter"/>
</dbReference>
<dbReference type="GO" id="GO:0006412">
    <property type="term" value="P:translation"/>
    <property type="evidence" value="ECO:0007669"/>
    <property type="project" value="UniProtKB-UniRule"/>
</dbReference>
<dbReference type="FunFam" id="3.30.860.10:FF:000001">
    <property type="entry name" value="30S ribosomal protein S19"/>
    <property type="match status" value="1"/>
</dbReference>
<dbReference type="Gene3D" id="3.30.860.10">
    <property type="entry name" value="30s Ribosomal Protein S19, Chain A"/>
    <property type="match status" value="1"/>
</dbReference>
<dbReference type="HAMAP" id="MF_00531">
    <property type="entry name" value="Ribosomal_uS19"/>
    <property type="match status" value="1"/>
</dbReference>
<dbReference type="InterPro" id="IPR002222">
    <property type="entry name" value="Ribosomal_uS19"/>
</dbReference>
<dbReference type="InterPro" id="IPR005732">
    <property type="entry name" value="Ribosomal_uS19_bac-type"/>
</dbReference>
<dbReference type="InterPro" id="IPR020934">
    <property type="entry name" value="Ribosomal_uS19_CS"/>
</dbReference>
<dbReference type="InterPro" id="IPR023575">
    <property type="entry name" value="Ribosomal_uS19_SF"/>
</dbReference>
<dbReference type="NCBIfam" id="TIGR01050">
    <property type="entry name" value="rpsS_bact"/>
    <property type="match status" value="1"/>
</dbReference>
<dbReference type="PANTHER" id="PTHR11880">
    <property type="entry name" value="RIBOSOMAL PROTEIN S19P FAMILY MEMBER"/>
    <property type="match status" value="1"/>
</dbReference>
<dbReference type="PANTHER" id="PTHR11880:SF8">
    <property type="entry name" value="SMALL RIBOSOMAL SUBUNIT PROTEIN US19M"/>
    <property type="match status" value="1"/>
</dbReference>
<dbReference type="Pfam" id="PF00203">
    <property type="entry name" value="Ribosomal_S19"/>
    <property type="match status" value="1"/>
</dbReference>
<dbReference type="PIRSF" id="PIRSF002144">
    <property type="entry name" value="Ribosomal_S19"/>
    <property type="match status" value="1"/>
</dbReference>
<dbReference type="PRINTS" id="PR00975">
    <property type="entry name" value="RIBOSOMALS19"/>
</dbReference>
<dbReference type="SUPFAM" id="SSF54570">
    <property type="entry name" value="Ribosomal protein S19"/>
    <property type="match status" value="1"/>
</dbReference>
<dbReference type="PROSITE" id="PS00323">
    <property type="entry name" value="RIBOSOMAL_S19"/>
    <property type="match status" value="1"/>
</dbReference>
<name>RR19_OENBI</name>
<accession>B0Z500</accession>
<evidence type="ECO:0000255" key="1">
    <source>
        <dbReference type="HAMAP-Rule" id="MF_00531"/>
    </source>
</evidence>
<evidence type="ECO:0000305" key="2"/>
<protein>
    <recommendedName>
        <fullName evidence="1">Small ribosomal subunit protein uS19c</fullName>
    </recommendedName>
    <alternativeName>
        <fullName evidence="2">30S ribosomal protein S19, chloroplastic</fullName>
    </alternativeName>
</protein>
<geneLocation type="chloroplast"/>
<reference key="1">
    <citation type="journal article" date="2008" name="Nucleic Acids Res.">
        <title>The complete nucleotide sequences of the five genetically distinct plastid genomes of Oenothera, subsection Oenothera: I. Sequence evaluation and plastome evolution.</title>
        <authorList>
            <person name="Greiner S."/>
            <person name="Wang X."/>
            <person name="Rauwolf U."/>
            <person name="Silber M.V."/>
            <person name="Mayer K."/>
            <person name="Meurer J."/>
            <person name="Haberer G."/>
            <person name="Herrmann R.G."/>
        </authorList>
    </citation>
    <scope>NUCLEOTIDE SEQUENCE [LARGE SCALE GENOMIC DNA]</scope>
    <source>
        <strain>cv. Suaveolens Grado</strain>
    </source>
</reference>
<feature type="chain" id="PRO_0000354368" description="Small ribosomal subunit protein uS19c">
    <location>
        <begin position="1"/>
        <end position="99"/>
    </location>
</feature>
<organism>
    <name type="scientific">Oenothera biennis</name>
    <name type="common">German evening primrose</name>
    <name type="synonym">Onagra biennis</name>
    <dbReference type="NCBI Taxonomy" id="3942"/>
    <lineage>
        <taxon>Eukaryota</taxon>
        <taxon>Viridiplantae</taxon>
        <taxon>Streptophyta</taxon>
        <taxon>Embryophyta</taxon>
        <taxon>Tracheophyta</taxon>
        <taxon>Spermatophyta</taxon>
        <taxon>Magnoliopsida</taxon>
        <taxon>eudicotyledons</taxon>
        <taxon>Gunneridae</taxon>
        <taxon>Pentapetalae</taxon>
        <taxon>rosids</taxon>
        <taxon>malvids</taxon>
        <taxon>Myrtales</taxon>
        <taxon>Onagraceae</taxon>
        <taxon>Onagroideae</taxon>
        <taxon>Onagreae</taxon>
        <taxon>Oenothera</taxon>
    </lineage>
</organism>
<sequence length="99" mass="11683">MKRSLKNNPFVANPLLRKMEKLNRREDKILIRTWSRASTIILTMIGHTIAIHNGKEHLPIYITDYMVGHKLGEFAPTINFHEHAKNDNKSRRSKMRIDY</sequence>
<comment type="function">
    <text evidence="1">Protein S19 forms a complex with S13 that binds strongly to the 16S ribosomal RNA.</text>
</comment>
<comment type="subcellular location">
    <subcellularLocation>
        <location>Plastid</location>
        <location>Chloroplast</location>
    </subcellularLocation>
</comment>
<comment type="similarity">
    <text evidence="1">Belongs to the universal ribosomal protein uS19 family.</text>
</comment>
<keyword id="KW-0150">Chloroplast</keyword>
<keyword id="KW-0934">Plastid</keyword>
<keyword id="KW-0687">Ribonucleoprotein</keyword>
<keyword id="KW-0689">Ribosomal protein</keyword>
<keyword id="KW-0694">RNA-binding</keyword>
<keyword id="KW-0699">rRNA-binding</keyword>
<gene>
    <name evidence="1" type="primary">rps19</name>
</gene>